<name>NUDT5_HUMAN</name>
<proteinExistence type="evidence at protein level"/>
<gene>
    <name type="primary">NUDT5</name>
    <name evidence="14" type="synonym">NUDIX5</name>
    <name evidence="12" type="ORF">HSPC115</name>
</gene>
<dbReference type="EC" id="3.6.1.13" evidence="5 8"/>
<dbReference type="EC" id="3.6.1.58" evidence="5 7 8"/>
<dbReference type="EC" id="2.7.7.96" evidence="10"/>
<dbReference type="EMBL" id="AF155832">
    <property type="protein sequence ID" value="AAF06734.1"/>
    <property type="molecule type" value="mRNA"/>
</dbReference>
<dbReference type="EMBL" id="AF218818">
    <property type="protein sequence ID" value="AAF25479.1"/>
    <property type="molecule type" value="mRNA"/>
</dbReference>
<dbReference type="EMBL" id="AF161464">
    <property type="protein sequence ID" value="AAF29079.1"/>
    <property type="molecule type" value="mRNA"/>
</dbReference>
<dbReference type="EMBL" id="CR457195">
    <property type="protein sequence ID" value="CAG33476.1"/>
    <property type="molecule type" value="mRNA"/>
</dbReference>
<dbReference type="EMBL" id="AK291131">
    <property type="protein sequence ID" value="BAF83820.1"/>
    <property type="molecule type" value="mRNA"/>
</dbReference>
<dbReference type="EMBL" id="CH471072">
    <property type="protein sequence ID" value="EAW86322.1"/>
    <property type="molecule type" value="Genomic_DNA"/>
</dbReference>
<dbReference type="EMBL" id="BC000025">
    <property type="protein sequence ID" value="AAH00025.1"/>
    <property type="molecule type" value="mRNA"/>
</dbReference>
<dbReference type="CCDS" id="CCDS7089.1"/>
<dbReference type="RefSeq" id="NP_054861.2">
    <property type="nucleotide sequence ID" value="NM_014142.3"/>
</dbReference>
<dbReference type="PDB" id="2DSB">
    <property type="method" value="X-ray"/>
    <property type="resolution" value="2.50 A"/>
    <property type="chains" value="A/B/C/D=1-219"/>
</dbReference>
<dbReference type="PDB" id="2DSC">
    <property type="method" value="X-ray"/>
    <property type="resolution" value="2.00 A"/>
    <property type="chains" value="A/B=1-210"/>
</dbReference>
<dbReference type="PDB" id="2DSD">
    <property type="method" value="X-ray"/>
    <property type="resolution" value="2.60 A"/>
    <property type="chains" value="A/B=1-210"/>
</dbReference>
<dbReference type="PDB" id="3AC9">
    <property type="method" value="X-ray"/>
    <property type="resolution" value="2.10 A"/>
    <property type="chains" value="A/B=14-208"/>
</dbReference>
<dbReference type="PDB" id="3ACA">
    <property type="method" value="X-ray"/>
    <property type="resolution" value="2.05 A"/>
    <property type="chains" value="A/B=13-208"/>
</dbReference>
<dbReference type="PDB" id="3BM4">
    <property type="method" value="X-ray"/>
    <property type="resolution" value="2.00 A"/>
    <property type="chains" value="A/B=1-210"/>
</dbReference>
<dbReference type="PDB" id="3L85">
    <property type="method" value="X-ray"/>
    <property type="resolution" value="2.30 A"/>
    <property type="chains" value="A/B=14-208"/>
</dbReference>
<dbReference type="PDB" id="5NQR">
    <property type="method" value="X-ray"/>
    <property type="resolution" value="2.20 A"/>
    <property type="chains" value="A/B=1-219"/>
</dbReference>
<dbReference type="PDB" id="5NWH">
    <property type="method" value="X-ray"/>
    <property type="resolution" value="2.60 A"/>
    <property type="chains" value="A/B=1-219"/>
</dbReference>
<dbReference type="PDB" id="5QJ4">
    <property type="method" value="X-ray"/>
    <property type="resolution" value="1.89 A"/>
    <property type="chains" value="A/B/C/D=1-208"/>
</dbReference>
<dbReference type="PDB" id="5QJ5">
    <property type="method" value="X-ray"/>
    <property type="resolution" value="1.72 A"/>
    <property type="chains" value="A/B/C/D=1-208"/>
</dbReference>
<dbReference type="PDB" id="5QJ6">
    <property type="method" value="X-ray"/>
    <property type="resolution" value="1.65 A"/>
    <property type="chains" value="A/B/C/D=1-208"/>
</dbReference>
<dbReference type="PDB" id="5QJ7">
    <property type="method" value="X-ray"/>
    <property type="resolution" value="1.56 A"/>
    <property type="chains" value="A/B/C/D=1-208"/>
</dbReference>
<dbReference type="PDB" id="5QJ8">
    <property type="method" value="X-ray"/>
    <property type="resolution" value="1.76 A"/>
    <property type="chains" value="A/B/C/D=1-208"/>
</dbReference>
<dbReference type="PDB" id="5QJ9">
    <property type="method" value="X-ray"/>
    <property type="resolution" value="1.85 A"/>
    <property type="chains" value="A/B/C/D=1-208"/>
</dbReference>
<dbReference type="PDB" id="5QJA">
    <property type="method" value="X-ray"/>
    <property type="resolution" value="1.64 A"/>
    <property type="chains" value="A/B/C/D=1-208"/>
</dbReference>
<dbReference type="PDB" id="5QJB">
    <property type="method" value="X-ray"/>
    <property type="resolution" value="1.66 A"/>
    <property type="chains" value="A/B/C/D=1-208"/>
</dbReference>
<dbReference type="PDB" id="5QJC">
    <property type="method" value="X-ray"/>
    <property type="resolution" value="1.47 A"/>
    <property type="chains" value="A/B/C/D=1-208"/>
</dbReference>
<dbReference type="PDB" id="5QJD">
    <property type="method" value="X-ray"/>
    <property type="resolution" value="1.61 A"/>
    <property type="chains" value="A/B/C/D=1-208"/>
</dbReference>
<dbReference type="PDB" id="5QJE">
    <property type="method" value="X-ray"/>
    <property type="resolution" value="1.75 A"/>
    <property type="chains" value="A/B/C/D=1-208"/>
</dbReference>
<dbReference type="PDB" id="5QJF">
    <property type="method" value="X-ray"/>
    <property type="resolution" value="1.63 A"/>
    <property type="chains" value="A/B/C/D=1-208"/>
</dbReference>
<dbReference type="PDB" id="5QJG">
    <property type="method" value="X-ray"/>
    <property type="resolution" value="1.57 A"/>
    <property type="chains" value="A/B/C/D=1-208"/>
</dbReference>
<dbReference type="PDB" id="5QJH">
    <property type="method" value="X-ray"/>
    <property type="resolution" value="2.03 A"/>
    <property type="chains" value="A/B/C/D=1-208"/>
</dbReference>
<dbReference type="PDB" id="5QJI">
    <property type="method" value="X-ray"/>
    <property type="resolution" value="1.69 A"/>
    <property type="chains" value="A/B/C/D=1-208"/>
</dbReference>
<dbReference type="PDB" id="5QJJ">
    <property type="method" value="X-ray"/>
    <property type="resolution" value="1.71 A"/>
    <property type="chains" value="A/B/C/D=1-208"/>
</dbReference>
<dbReference type="PDB" id="5QJK">
    <property type="method" value="X-ray"/>
    <property type="resolution" value="1.65 A"/>
    <property type="chains" value="A/B/C/D=1-208"/>
</dbReference>
<dbReference type="PDB" id="5QJL">
    <property type="method" value="X-ray"/>
    <property type="resolution" value="1.66 A"/>
    <property type="chains" value="A/B/C/D=1-208"/>
</dbReference>
<dbReference type="PDB" id="5QJM">
    <property type="method" value="X-ray"/>
    <property type="resolution" value="1.75 A"/>
    <property type="chains" value="A/B/C/D=1-208"/>
</dbReference>
<dbReference type="PDB" id="5QJN">
    <property type="method" value="X-ray"/>
    <property type="resolution" value="1.77 A"/>
    <property type="chains" value="A/B/C/D=1-208"/>
</dbReference>
<dbReference type="PDB" id="5QJO">
    <property type="method" value="X-ray"/>
    <property type="resolution" value="1.98 A"/>
    <property type="chains" value="A/B/C/D=1-208"/>
</dbReference>
<dbReference type="PDB" id="5QJP">
    <property type="method" value="X-ray"/>
    <property type="resolution" value="1.50 A"/>
    <property type="chains" value="A/B/C/D=1-208"/>
</dbReference>
<dbReference type="PDB" id="5QJQ">
    <property type="method" value="X-ray"/>
    <property type="resolution" value="1.55 A"/>
    <property type="chains" value="A/B/C/D=1-208"/>
</dbReference>
<dbReference type="PDB" id="5QJR">
    <property type="method" value="X-ray"/>
    <property type="resolution" value="1.62 A"/>
    <property type="chains" value="A/B/C/D=1-208"/>
</dbReference>
<dbReference type="PDB" id="5QJS">
    <property type="method" value="X-ray"/>
    <property type="resolution" value="1.58 A"/>
    <property type="chains" value="A/B/C/D=1-208"/>
</dbReference>
<dbReference type="PDB" id="5QJT">
    <property type="method" value="X-ray"/>
    <property type="resolution" value="1.62 A"/>
    <property type="chains" value="A/B/C/D=1-208"/>
</dbReference>
<dbReference type="PDB" id="5QJU">
    <property type="method" value="X-ray"/>
    <property type="resolution" value="1.77 A"/>
    <property type="chains" value="A/B/C/D=1-208"/>
</dbReference>
<dbReference type="PDB" id="5QJV">
    <property type="method" value="X-ray"/>
    <property type="resolution" value="1.61 A"/>
    <property type="chains" value="A/B/C/D=1-208"/>
</dbReference>
<dbReference type="PDB" id="5QJW">
    <property type="method" value="X-ray"/>
    <property type="resolution" value="1.57 A"/>
    <property type="chains" value="A/B/C/D=1-208"/>
</dbReference>
<dbReference type="PDB" id="5QJX">
    <property type="method" value="X-ray"/>
    <property type="resolution" value="1.73 A"/>
    <property type="chains" value="A/B/C/D=1-208"/>
</dbReference>
<dbReference type="PDB" id="5QJY">
    <property type="method" value="X-ray"/>
    <property type="resolution" value="1.77 A"/>
    <property type="chains" value="A/B/C/D=1-208"/>
</dbReference>
<dbReference type="PDB" id="5QJZ">
    <property type="method" value="X-ray"/>
    <property type="resolution" value="1.52 A"/>
    <property type="chains" value="A/B/C/D=1-208"/>
</dbReference>
<dbReference type="PDB" id="5QK0">
    <property type="method" value="X-ray"/>
    <property type="resolution" value="1.44 A"/>
    <property type="chains" value="A/B/C/D=1-208"/>
</dbReference>
<dbReference type="PDB" id="5QK1">
    <property type="method" value="X-ray"/>
    <property type="resolution" value="1.49 A"/>
    <property type="chains" value="A/B/C/D=1-208"/>
</dbReference>
<dbReference type="PDB" id="5QK2">
    <property type="method" value="X-ray"/>
    <property type="resolution" value="1.65 A"/>
    <property type="chains" value="A/B/C/D=1-208"/>
</dbReference>
<dbReference type="PDB" id="5QK3">
    <property type="method" value="X-ray"/>
    <property type="resolution" value="1.71 A"/>
    <property type="chains" value="A/B/C/D=1-208"/>
</dbReference>
<dbReference type="PDB" id="5QK4">
    <property type="method" value="X-ray"/>
    <property type="resolution" value="1.62 A"/>
    <property type="chains" value="A/B/C/D=1-208"/>
</dbReference>
<dbReference type="PDB" id="5QK5">
    <property type="method" value="X-ray"/>
    <property type="resolution" value="1.63 A"/>
    <property type="chains" value="A/B/C/D=1-208"/>
</dbReference>
<dbReference type="PDB" id="5QK6">
    <property type="method" value="X-ray"/>
    <property type="resolution" value="1.51 A"/>
    <property type="chains" value="A/B/C/D=1-208"/>
</dbReference>
<dbReference type="PDB" id="5QK7">
    <property type="method" value="X-ray"/>
    <property type="resolution" value="1.66 A"/>
    <property type="chains" value="A/B/C/D=1-208"/>
</dbReference>
<dbReference type="PDB" id="5QK8">
    <property type="method" value="X-ray"/>
    <property type="resolution" value="1.71 A"/>
    <property type="chains" value="A/B/C/D=1-208"/>
</dbReference>
<dbReference type="PDB" id="5QK9">
    <property type="method" value="X-ray"/>
    <property type="resolution" value="1.56 A"/>
    <property type="chains" value="A/B/C/D=1-208"/>
</dbReference>
<dbReference type="PDB" id="5QKA">
    <property type="method" value="X-ray"/>
    <property type="resolution" value="1.55 A"/>
    <property type="chains" value="A/B/C/D=1-208"/>
</dbReference>
<dbReference type="PDB" id="5QKB">
    <property type="method" value="X-ray"/>
    <property type="resolution" value="1.58 A"/>
    <property type="chains" value="A/B/C/D=1-208"/>
</dbReference>
<dbReference type="PDB" id="5QTL">
    <property type="method" value="X-ray"/>
    <property type="resolution" value="1.73 A"/>
    <property type="chains" value="A/B/C/D=1-208"/>
</dbReference>
<dbReference type="PDB" id="5QTM">
    <property type="method" value="X-ray"/>
    <property type="resolution" value="1.79 A"/>
    <property type="chains" value="A/B/C/D=1-208"/>
</dbReference>
<dbReference type="PDB" id="5QTN">
    <property type="method" value="X-ray"/>
    <property type="resolution" value="1.83 A"/>
    <property type="chains" value="A/B/C/D=1-208"/>
</dbReference>
<dbReference type="PDB" id="5QTO">
    <property type="method" value="X-ray"/>
    <property type="resolution" value="1.67 A"/>
    <property type="chains" value="A/B/C/D=1-208"/>
</dbReference>
<dbReference type="PDB" id="5QTP">
    <property type="method" value="X-ray"/>
    <property type="resolution" value="1.73 A"/>
    <property type="chains" value="A/B/C/D=1-208"/>
</dbReference>
<dbReference type="PDB" id="5QTQ">
    <property type="method" value="X-ray"/>
    <property type="resolution" value="1.82 A"/>
    <property type="chains" value="A/B/C/D=1-208"/>
</dbReference>
<dbReference type="PDB" id="5QTR">
    <property type="method" value="X-ray"/>
    <property type="resolution" value="1.55 A"/>
    <property type="chains" value="A/B/C/D=1-208"/>
</dbReference>
<dbReference type="PDB" id="5QTS">
    <property type="method" value="X-ray"/>
    <property type="resolution" value="1.85 A"/>
    <property type="chains" value="A/B/C/D=1-208"/>
</dbReference>
<dbReference type="PDB" id="6GRU">
    <property type="method" value="X-ray"/>
    <property type="resolution" value="1.93 A"/>
    <property type="chains" value="A/B/C/D=1-208"/>
</dbReference>
<dbReference type="PDB" id="8PTT">
    <property type="method" value="X-ray"/>
    <property type="resolution" value="2.50 A"/>
    <property type="chains" value="A/B/C/D=1-219"/>
</dbReference>
<dbReference type="PDB" id="8RDZ">
    <property type="method" value="X-ray"/>
    <property type="resolution" value="2.02 A"/>
    <property type="chains" value="A/B/C/D=1-219"/>
</dbReference>
<dbReference type="PDB" id="8RIY">
    <property type="method" value="X-ray"/>
    <property type="resolution" value="2.29 A"/>
    <property type="chains" value="AAA/BBB=1-208"/>
</dbReference>
<dbReference type="PDBsum" id="2DSB"/>
<dbReference type="PDBsum" id="2DSC"/>
<dbReference type="PDBsum" id="2DSD"/>
<dbReference type="PDBsum" id="3AC9"/>
<dbReference type="PDBsum" id="3ACA"/>
<dbReference type="PDBsum" id="3BM4"/>
<dbReference type="PDBsum" id="3L85"/>
<dbReference type="PDBsum" id="5NQR"/>
<dbReference type="PDBsum" id="5NWH"/>
<dbReference type="PDBsum" id="5QJ4"/>
<dbReference type="PDBsum" id="5QJ5"/>
<dbReference type="PDBsum" id="5QJ6"/>
<dbReference type="PDBsum" id="5QJ7"/>
<dbReference type="PDBsum" id="5QJ8"/>
<dbReference type="PDBsum" id="5QJ9"/>
<dbReference type="PDBsum" id="5QJA"/>
<dbReference type="PDBsum" id="5QJB"/>
<dbReference type="PDBsum" id="5QJC"/>
<dbReference type="PDBsum" id="5QJD"/>
<dbReference type="PDBsum" id="5QJE"/>
<dbReference type="PDBsum" id="5QJF"/>
<dbReference type="PDBsum" id="5QJG"/>
<dbReference type="PDBsum" id="5QJH"/>
<dbReference type="PDBsum" id="5QJI"/>
<dbReference type="PDBsum" id="5QJJ"/>
<dbReference type="PDBsum" id="5QJK"/>
<dbReference type="PDBsum" id="5QJL"/>
<dbReference type="PDBsum" id="5QJM"/>
<dbReference type="PDBsum" id="5QJN"/>
<dbReference type="PDBsum" id="5QJO"/>
<dbReference type="PDBsum" id="5QJP"/>
<dbReference type="PDBsum" id="5QJQ"/>
<dbReference type="PDBsum" id="5QJR"/>
<dbReference type="PDBsum" id="5QJS"/>
<dbReference type="PDBsum" id="5QJT"/>
<dbReference type="PDBsum" id="5QJU"/>
<dbReference type="PDBsum" id="5QJV"/>
<dbReference type="PDBsum" id="5QJW"/>
<dbReference type="PDBsum" id="5QJX"/>
<dbReference type="PDBsum" id="5QJY"/>
<dbReference type="PDBsum" id="5QJZ"/>
<dbReference type="PDBsum" id="5QK0"/>
<dbReference type="PDBsum" id="5QK1"/>
<dbReference type="PDBsum" id="5QK2"/>
<dbReference type="PDBsum" id="5QK3"/>
<dbReference type="PDBsum" id="5QK4"/>
<dbReference type="PDBsum" id="5QK5"/>
<dbReference type="PDBsum" id="5QK6"/>
<dbReference type="PDBsum" id="5QK7"/>
<dbReference type="PDBsum" id="5QK8"/>
<dbReference type="PDBsum" id="5QK9"/>
<dbReference type="PDBsum" id="5QKA"/>
<dbReference type="PDBsum" id="5QKB"/>
<dbReference type="PDBsum" id="5QTL"/>
<dbReference type="PDBsum" id="5QTM"/>
<dbReference type="PDBsum" id="5QTN"/>
<dbReference type="PDBsum" id="5QTO"/>
<dbReference type="PDBsum" id="5QTP"/>
<dbReference type="PDBsum" id="5QTQ"/>
<dbReference type="PDBsum" id="5QTR"/>
<dbReference type="PDBsum" id="5QTS"/>
<dbReference type="PDBsum" id="6GRU"/>
<dbReference type="PDBsum" id="8PTT"/>
<dbReference type="PDBsum" id="8RDZ"/>
<dbReference type="PDBsum" id="8RIY"/>
<dbReference type="SMR" id="Q9UKK9"/>
<dbReference type="BioGRID" id="116335">
    <property type="interactions" value="77"/>
</dbReference>
<dbReference type="FunCoup" id="Q9UKK9">
    <property type="interactions" value="2117"/>
</dbReference>
<dbReference type="IntAct" id="Q9UKK9">
    <property type="interactions" value="39"/>
</dbReference>
<dbReference type="MINT" id="Q9UKK9"/>
<dbReference type="STRING" id="9606.ENSP00000419628"/>
<dbReference type="BindingDB" id="Q9UKK9"/>
<dbReference type="ChEMBL" id="CHEMBL4105713"/>
<dbReference type="GlyGen" id="Q9UKK9">
    <property type="glycosylation" value="1 site, 1 O-linked glycan (1 site)"/>
</dbReference>
<dbReference type="iPTMnet" id="Q9UKK9"/>
<dbReference type="MetOSite" id="Q9UKK9"/>
<dbReference type="PhosphoSitePlus" id="Q9UKK9"/>
<dbReference type="SwissPalm" id="Q9UKK9"/>
<dbReference type="BioMuta" id="NUDT5"/>
<dbReference type="jPOST" id="Q9UKK9"/>
<dbReference type="MassIVE" id="Q9UKK9"/>
<dbReference type="PaxDb" id="9606-ENSP00000419628"/>
<dbReference type="PeptideAtlas" id="Q9UKK9"/>
<dbReference type="ProteomicsDB" id="84813"/>
<dbReference type="Pumba" id="Q9UKK9"/>
<dbReference type="Antibodypedia" id="11248">
    <property type="antibodies" value="118 antibodies from 26 providers"/>
</dbReference>
<dbReference type="DNASU" id="11164"/>
<dbReference type="Ensembl" id="ENST00000491614.6">
    <property type="protein sequence ID" value="ENSP00000419628.1"/>
    <property type="gene ID" value="ENSG00000165609.14"/>
</dbReference>
<dbReference type="GeneID" id="11164"/>
<dbReference type="KEGG" id="hsa:11164"/>
<dbReference type="MANE-Select" id="ENST00000491614.6">
    <property type="protein sequence ID" value="ENSP00000419628.1"/>
    <property type="RefSeq nucleotide sequence ID" value="NM_014142.4"/>
    <property type="RefSeq protein sequence ID" value="NP_054861.2"/>
</dbReference>
<dbReference type="UCSC" id="uc001ilj.4">
    <property type="organism name" value="human"/>
</dbReference>
<dbReference type="AGR" id="HGNC:8052"/>
<dbReference type="CTD" id="11164"/>
<dbReference type="DisGeNET" id="11164"/>
<dbReference type="GeneCards" id="NUDT5"/>
<dbReference type="HGNC" id="HGNC:8052">
    <property type="gene designation" value="NUDT5"/>
</dbReference>
<dbReference type="HPA" id="ENSG00000165609">
    <property type="expression patterns" value="Low tissue specificity"/>
</dbReference>
<dbReference type="MIM" id="609230">
    <property type="type" value="gene"/>
</dbReference>
<dbReference type="neXtProt" id="NX_Q9UKK9"/>
<dbReference type="OpenTargets" id="ENSG00000165609"/>
<dbReference type="PharmGKB" id="PA31838"/>
<dbReference type="VEuPathDB" id="HostDB:ENSG00000165609"/>
<dbReference type="eggNOG" id="KOG3041">
    <property type="taxonomic scope" value="Eukaryota"/>
</dbReference>
<dbReference type="GeneTree" id="ENSGT00940000154045"/>
<dbReference type="HOGENOM" id="CLU_062658_0_2_1"/>
<dbReference type="InParanoid" id="Q9UKK9"/>
<dbReference type="OMA" id="NDPGLCN"/>
<dbReference type="OrthoDB" id="10249920at2759"/>
<dbReference type="PAN-GO" id="Q9UKK9">
    <property type="GO annotations" value="4 GO annotations based on evolutionary models"/>
</dbReference>
<dbReference type="PhylomeDB" id="Q9UKK9"/>
<dbReference type="TreeFam" id="TF106347"/>
<dbReference type="BioCyc" id="MetaCyc:HS09255-MONOMER"/>
<dbReference type="BRENDA" id="2.7.7.96">
    <property type="organism ID" value="2681"/>
</dbReference>
<dbReference type="BRENDA" id="3.6.1.13">
    <property type="organism ID" value="2681"/>
</dbReference>
<dbReference type="BRENDA" id="3.6.1.58">
    <property type="organism ID" value="2681"/>
</dbReference>
<dbReference type="PathwayCommons" id="Q9UKK9"/>
<dbReference type="Reactome" id="R-HSA-2393930">
    <property type="pathway name" value="Phosphate bond hydrolysis by NUDT proteins"/>
</dbReference>
<dbReference type="SABIO-RK" id="Q9UKK9"/>
<dbReference type="SignaLink" id="Q9UKK9"/>
<dbReference type="BioGRID-ORCS" id="11164">
    <property type="hits" value="19 hits in 1168 CRISPR screens"/>
</dbReference>
<dbReference type="ChiTaRS" id="NUDT5">
    <property type="organism name" value="human"/>
</dbReference>
<dbReference type="EvolutionaryTrace" id="Q9UKK9"/>
<dbReference type="GeneWiki" id="NUDT5"/>
<dbReference type="GenomeRNAi" id="11164"/>
<dbReference type="Pharos" id="Q9UKK9">
    <property type="development level" value="Tbio"/>
</dbReference>
<dbReference type="PRO" id="PR:Q9UKK9"/>
<dbReference type="Proteomes" id="UP000005640">
    <property type="component" value="Chromosome 10"/>
</dbReference>
<dbReference type="RNAct" id="Q9UKK9">
    <property type="molecule type" value="protein"/>
</dbReference>
<dbReference type="Bgee" id="ENSG00000165609">
    <property type="expression patterns" value="Expressed in primordial germ cell in gonad and 185 other cell types or tissues"/>
</dbReference>
<dbReference type="ExpressionAtlas" id="Q9UKK9">
    <property type="expression patterns" value="baseline and differential"/>
</dbReference>
<dbReference type="GO" id="GO:0005829">
    <property type="term" value="C:cytosol"/>
    <property type="evidence" value="ECO:0000304"/>
    <property type="project" value="Reactome"/>
</dbReference>
<dbReference type="GO" id="GO:0070062">
    <property type="term" value="C:extracellular exosome"/>
    <property type="evidence" value="ECO:0007005"/>
    <property type="project" value="UniProtKB"/>
</dbReference>
<dbReference type="GO" id="GO:0005634">
    <property type="term" value="C:nucleus"/>
    <property type="evidence" value="ECO:0000314"/>
    <property type="project" value="UniProtKB"/>
</dbReference>
<dbReference type="GO" id="GO:0044715">
    <property type="term" value="F:8-oxo-dGDP phosphatase activity"/>
    <property type="evidence" value="ECO:0000314"/>
    <property type="project" value="UniProtKB"/>
</dbReference>
<dbReference type="GO" id="GO:0047631">
    <property type="term" value="F:ADP-ribose diphosphatase activity"/>
    <property type="evidence" value="ECO:0000314"/>
    <property type="project" value="UniProtKB"/>
</dbReference>
<dbReference type="GO" id="GO:0019144">
    <property type="term" value="F:ADP-sugar diphosphatase activity"/>
    <property type="evidence" value="ECO:0000314"/>
    <property type="project" value="UniProtKB"/>
</dbReference>
<dbReference type="GO" id="GO:0042802">
    <property type="term" value="F:identical protein binding"/>
    <property type="evidence" value="ECO:0000353"/>
    <property type="project" value="IntAct"/>
</dbReference>
<dbReference type="GO" id="GO:0000287">
    <property type="term" value="F:magnesium ion binding"/>
    <property type="evidence" value="ECO:0000314"/>
    <property type="project" value="UniProtKB"/>
</dbReference>
<dbReference type="GO" id="GO:0016779">
    <property type="term" value="F:nucleotidyltransferase activity"/>
    <property type="evidence" value="ECO:0000314"/>
    <property type="project" value="UniProtKB"/>
</dbReference>
<dbReference type="GO" id="GO:0042803">
    <property type="term" value="F:protein homodimerization activity"/>
    <property type="evidence" value="ECO:0000314"/>
    <property type="project" value="UniProtKB"/>
</dbReference>
<dbReference type="GO" id="GO:0030515">
    <property type="term" value="F:snoRNA binding"/>
    <property type="evidence" value="ECO:0000250"/>
    <property type="project" value="UniProtKB"/>
</dbReference>
<dbReference type="GO" id="GO:1990966">
    <property type="term" value="P:ATP generation from poly-ADP-D-ribose"/>
    <property type="evidence" value="ECO:0000314"/>
    <property type="project" value="UniProtKB"/>
</dbReference>
<dbReference type="GO" id="GO:0006338">
    <property type="term" value="P:chromatin remodeling"/>
    <property type="evidence" value="ECO:0000314"/>
    <property type="project" value="UniProtKB"/>
</dbReference>
<dbReference type="GO" id="GO:0019303">
    <property type="term" value="P:D-ribose catabolic process"/>
    <property type="evidence" value="ECO:0000314"/>
    <property type="project" value="UniProtKB"/>
</dbReference>
<dbReference type="GO" id="GO:0055086">
    <property type="term" value="P:nucleobase-containing small molecule metabolic process"/>
    <property type="evidence" value="ECO:0000304"/>
    <property type="project" value="Reactome"/>
</dbReference>
<dbReference type="GO" id="GO:0006753">
    <property type="term" value="P:nucleoside phosphate metabolic process"/>
    <property type="evidence" value="ECO:0000318"/>
    <property type="project" value="GO_Central"/>
</dbReference>
<dbReference type="GO" id="GO:0009117">
    <property type="term" value="P:nucleotide metabolic process"/>
    <property type="evidence" value="ECO:0000303"/>
    <property type="project" value="ProtInc"/>
</dbReference>
<dbReference type="GO" id="GO:0009191">
    <property type="term" value="P:ribonucleoside diphosphate catabolic process"/>
    <property type="evidence" value="ECO:0000314"/>
    <property type="project" value="UniProtKB"/>
</dbReference>
<dbReference type="GO" id="GO:0019693">
    <property type="term" value="P:ribose phosphate metabolic process"/>
    <property type="evidence" value="ECO:0000318"/>
    <property type="project" value="GO_Central"/>
</dbReference>
<dbReference type="CDD" id="cd18888">
    <property type="entry name" value="NUDIX_ADPRase_Nudt5"/>
    <property type="match status" value="1"/>
</dbReference>
<dbReference type="FunFam" id="3.90.79.10:FF:000016">
    <property type="entry name" value="ADP-sugar pyrophosphatase isoform X1"/>
    <property type="match status" value="1"/>
</dbReference>
<dbReference type="Gene3D" id="3.90.79.10">
    <property type="entry name" value="Nucleoside Triphosphate Pyrophosphohydrolase"/>
    <property type="match status" value="1"/>
</dbReference>
<dbReference type="InterPro" id="IPR020476">
    <property type="entry name" value="Nudix_hydrolase"/>
</dbReference>
<dbReference type="InterPro" id="IPR015797">
    <property type="entry name" value="NUDIX_hydrolase-like_dom_sf"/>
</dbReference>
<dbReference type="InterPro" id="IPR020084">
    <property type="entry name" value="NUDIX_hydrolase_CS"/>
</dbReference>
<dbReference type="InterPro" id="IPR000086">
    <property type="entry name" value="NUDIX_hydrolase_dom"/>
</dbReference>
<dbReference type="PANTHER" id="PTHR11839:SF24">
    <property type="entry name" value="ADP-SUGAR PYROPHOSPHATASE"/>
    <property type="match status" value="1"/>
</dbReference>
<dbReference type="PANTHER" id="PTHR11839">
    <property type="entry name" value="UDP/ADP-SUGAR PYROPHOSPHATASE"/>
    <property type="match status" value="1"/>
</dbReference>
<dbReference type="Pfam" id="PF00293">
    <property type="entry name" value="NUDIX"/>
    <property type="match status" value="1"/>
</dbReference>
<dbReference type="PRINTS" id="PR00502">
    <property type="entry name" value="NUDIXFAMILY"/>
</dbReference>
<dbReference type="SUPFAM" id="SSF55811">
    <property type="entry name" value="Nudix"/>
    <property type="match status" value="1"/>
</dbReference>
<dbReference type="PROSITE" id="PS51462">
    <property type="entry name" value="NUDIX"/>
    <property type="match status" value="1"/>
</dbReference>
<dbReference type="PROSITE" id="PS00893">
    <property type="entry name" value="NUDIX_BOX"/>
    <property type="match status" value="1"/>
</dbReference>
<sequence length="219" mass="24328">MESQEPTESSQNGKQYIISEELISEGKWVKLEKTTYMDPTGKTRTWESVKRTTRKEQTADGVAVIPVLQRTLHYECIVLVKQFRPPMGGYCIEFPAGLIDDGETPEAAALRELEEETGYKGDIAECSPAVCMDPGLSNCTIHIVTVTINGDDAENARPKPKPGDGEFVEVISLPKNDLLQRLDALVAEEHLTVDARVYSYALALKHANAKPFEVPFLKF</sequence>
<feature type="chain" id="PRO_0000057048" description="ADP-sugar pyrophosphatase">
    <location>
        <begin position="1"/>
        <end position="219"/>
    </location>
</feature>
<feature type="domain" description="Nudix hydrolase" evidence="2">
    <location>
        <begin position="57"/>
        <end position="197"/>
    </location>
</feature>
<feature type="short sequence motif" description="Nudix box">
    <location>
        <begin position="97"/>
        <end position="118"/>
    </location>
</feature>
<feature type="binding site" description="in other chain" evidence="5 6 9">
    <location>
        <position position="28"/>
    </location>
    <ligand>
        <name>substrate</name>
        <note>ligand shared between dimeric partners</note>
    </ligand>
</feature>
<feature type="binding site" evidence="5 6 9">
    <location>
        <begin position="46"/>
        <end position="47"/>
    </location>
    <ligand>
        <name>substrate</name>
        <note>ligand shared between dimeric partners</note>
    </ligand>
</feature>
<feature type="binding site" evidence="5 6 9">
    <location>
        <position position="51"/>
    </location>
    <ligand>
        <name>substrate</name>
        <note>ligand shared between dimeric partners</note>
    </ligand>
</feature>
<feature type="binding site" description="in other chain" evidence="5 6 9">
    <location>
        <position position="84"/>
    </location>
    <ligand>
        <name>substrate</name>
        <note>ligand shared between dimeric partners</note>
    </ligand>
</feature>
<feature type="binding site" evidence="5 6 9">
    <location>
        <position position="96"/>
    </location>
    <ligand>
        <name>Mg(2+)</name>
        <dbReference type="ChEBI" id="CHEBI:18420"/>
        <label>1</label>
    </ligand>
</feature>
<feature type="binding site" description="in other chain" evidence="5">
    <location>
        <position position="98"/>
    </location>
    <ligand>
        <name>substrate</name>
        <note>ligand shared between dimeric partners</note>
    </ligand>
</feature>
<feature type="binding site" evidence="5 6 9">
    <location>
        <position position="112"/>
    </location>
    <ligand>
        <name>Mg(2+)</name>
        <dbReference type="ChEBI" id="CHEBI:18420"/>
        <label>2</label>
    </ligand>
</feature>
<feature type="binding site" evidence="5 6 9">
    <location>
        <position position="112"/>
    </location>
    <ligand>
        <name>Mg(2+)</name>
        <dbReference type="ChEBI" id="CHEBI:18420"/>
        <label>3</label>
    </ligand>
</feature>
<feature type="binding site" evidence="5 6 9">
    <location>
        <position position="116"/>
    </location>
    <ligand>
        <name>Mg(2+)</name>
        <dbReference type="ChEBI" id="CHEBI:18420"/>
        <label>1</label>
    </ligand>
</feature>
<feature type="binding site" evidence="5 6 9">
    <location>
        <position position="116"/>
    </location>
    <ligand>
        <name>Mg(2+)</name>
        <dbReference type="ChEBI" id="CHEBI:18420"/>
        <label>3</label>
    </ligand>
</feature>
<feature type="binding site" description="in other chain" evidence="5">
    <location>
        <position position="133"/>
    </location>
    <ligand>
        <name>substrate</name>
        <note>ligand shared between dimeric partners</note>
    </ligand>
</feature>
<feature type="binding site" evidence="5 6 9">
    <location>
        <position position="166"/>
    </location>
    <ligand>
        <name>Mg(2+)</name>
        <dbReference type="ChEBI" id="CHEBI:18420"/>
        <label>3</label>
    </ligand>
</feature>
<feature type="modified residue" description="N-acetylmethionine" evidence="18 20 21 22">
    <location>
        <position position="1"/>
    </location>
</feature>
<feature type="modified residue" description="Phosphoserine" evidence="21 23">
    <location>
        <position position="3"/>
    </location>
</feature>
<feature type="modified residue" description="Phosphoserine" evidence="20">
    <location>
        <position position="10"/>
    </location>
</feature>
<feature type="modified residue" description="Phosphothreonine" evidence="10">
    <location>
        <position position="45"/>
    </location>
</feature>
<feature type="modified residue" description="Phosphotyrosine" evidence="17">
    <location>
        <position position="74"/>
    </location>
</feature>
<feature type="modified residue" description="N6-acetyllysine" evidence="19">
    <location>
        <position position="210"/>
    </location>
</feature>
<feature type="modified residue" description="N6-acetyllysine" evidence="19">
    <location>
        <position position="218"/>
    </location>
</feature>
<feature type="cross-link" description="Glycyl lysine isopeptide (Lys-Gly) (interchain with G-Cter in SUMO2)" evidence="24">
    <location>
        <position position="42"/>
    </location>
</feature>
<feature type="sequence variant" id="VAR_034159" description="In dbSNP:rs34863826.">
    <original>I</original>
    <variation>T</variation>
    <location>
        <position position="123"/>
    </location>
</feature>
<feature type="mutagenesis site" description="Reduces affinity for substrate about 8-fold. Strongly reduced catalytic activity and strongly reduced affinity for substrate; when associated with A-46." evidence="6">
    <original>W</original>
    <variation>A</variation>
    <location>
        <position position="28"/>
    </location>
</feature>
<feature type="mutagenesis site" description="Impaired phosphorylation; generates ATP in the presence of diphosphate." evidence="10">
    <original>T</original>
    <variation>A</variation>
    <location>
        <position position="45"/>
    </location>
</feature>
<feature type="mutagenesis site" description="Phosphomimetic mutant; unable to generate ATP in the presence of diphosphate." evidence="10">
    <original>T</original>
    <variation>D</variation>
    <location>
        <position position="45"/>
    </location>
</feature>
<feature type="mutagenesis site" description="Reduces affinity for substrate about 6-fold. Strongly reduced catalytic activity and strongly reduced affinity for substrate; when associated with A-28." evidence="6">
    <original>W</original>
    <variation>A</variation>
    <location>
        <position position="46"/>
    </location>
</feature>
<feature type="mutagenesis site" description="Reduces affinity for substrate about 15-fold and reduces catalytic rate about 17-fold." evidence="6">
    <original>R</original>
    <variation>Q</variation>
    <location>
        <position position="51"/>
    </location>
</feature>
<feature type="mutagenesis site" description="Reduces affinity for substrate about 5-fold and reduces catalytic rate 67-fold." evidence="6">
    <original>R</original>
    <variation>Q</variation>
    <location>
        <position position="84"/>
    </location>
</feature>
<feature type="mutagenesis site" description="Reduces affinity for substrate about 6-fold." evidence="6">
    <original>L</original>
    <variation>A</variation>
    <location>
        <position position="98"/>
    </location>
</feature>
<feature type="mutagenesis site" description="Catalytic inactive mutant for both ADP-sugar pyrophosphatase and nuclear ATP-synthesis activities. Reduces catalytic rate 6300-fold." evidence="6 10">
    <original>E</original>
    <variation>Q</variation>
    <location>
        <position position="112"/>
    </location>
</feature>
<feature type="mutagenesis site" description="Reduces catalytic rate 2000-fold." evidence="6">
    <original>E</original>
    <variation>Q</variation>
    <location>
        <position position="116"/>
    </location>
</feature>
<feature type="mutagenesis site" description="Reduces catalytic rate 120-fold." evidence="6">
    <original>E</original>
    <variation>Q</variation>
    <location>
        <position position="166"/>
    </location>
</feature>
<feature type="sequence conflict" description="In Ref. 2; AAF25479." evidence="15" ref="2">
    <original>KRT</original>
    <variation>NVP</variation>
    <location>
        <begin position="50"/>
        <end position="52"/>
    </location>
</feature>
<feature type="strand" evidence="27">
    <location>
        <begin position="16"/>
        <end position="25"/>
    </location>
</feature>
<feature type="strand" evidence="27">
    <location>
        <begin position="27"/>
        <end position="37"/>
    </location>
</feature>
<feature type="strand" evidence="27">
    <location>
        <begin position="43"/>
        <end position="53"/>
    </location>
</feature>
<feature type="strand" evidence="27">
    <location>
        <begin position="55"/>
        <end position="69"/>
    </location>
</feature>
<feature type="strand" evidence="27">
    <location>
        <begin position="76"/>
        <end position="84"/>
    </location>
</feature>
<feature type="turn" evidence="27">
    <location>
        <begin position="85"/>
        <end position="88"/>
    </location>
</feature>
<feature type="strand" evidence="27">
    <location>
        <begin position="89"/>
        <end position="93"/>
    </location>
</feature>
<feature type="strand" evidence="27">
    <location>
        <begin position="96"/>
        <end position="98"/>
    </location>
</feature>
<feature type="helix" evidence="27">
    <location>
        <begin position="105"/>
        <end position="117"/>
    </location>
</feature>
<feature type="strand" evidence="27">
    <location>
        <begin position="122"/>
        <end position="132"/>
    </location>
</feature>
<feature type="turn" evidence="27">
    <location>
        <begin position="134"/>
        <end position="136"/>
    </location>
</feature>
<feature type="strand" evidence="27">
    <location>
        <begin position="140"/>
        <end position="149"/>
    </location>
</feature>
<feature type="helix" evidence="27">
    <location>
        <begin position="153"/>
        <end position="155"/>
    </location>
</feature>
<feature type="strand" evidence="26">
    <location>
        <begin position="164"/>
        <end position="166"/>
    </location>
</feature>
<feature type="strand" evidence="27">
    <location>
        <begin position="169"/>
        <end position="174"/>
    </location>
</feature>
<feature type="helix" evidence="27">
    <location>
        <begin position="175"/>
        <end position="177"/>
    </location>
</feature>
<feature type="helix" evidence="27">
    <location>
        <begin position="178"/>
        <end position="188"/>
    </location>
</feature>
<feature type="strand" evidence="27">
    <location>
        <begin position="192"/>
        <end position="194"/>
    </location>
</feature>
<feature type="helix" evidence="27">
    <location>
        <begin position="195"/>
        <end position="206"/>
    </location>
</feature>
<feature type="turn" evidence="25">
    <location>
        <begin position="211"/>
        <end position="213"/>
    </location>
</feature>
<feature type="helix" evidence="25">
    <location>
        <begin position="214"/>
        <end position="216"/>
    </location>
</feature>
<comment type="function">
    <text evidence="1 3 4 5 7 8 10">Enzyme that can either act as an ADP-sugar pyrophosphatase in absence of diphosphate or catalyze the synthesis of ATP in presence of diphosphate (PubMed:27257257). In absence of diphosphate, hydrolyzes with similar activities various modified nucleoside diphosphates such as ADP-ribose, ADP-mannose, ADP-glucose, 8-oxo-GDP and 8-oxo-dGDP (PubMed:10567213, PubMed:10722730, PubMed:17052728, PubMed:19699693, PubMed:21389046). Can also hydrolyze other nucleotide sugars with low activity (PubMed:19699693, PubMed:21389046). In presence of diphosphate, mediates the synthesis of ATP in the nucleus by catalyzing the conversion of ADP-ribose to ATP and ribose 5-phosphate. Nuclear ATP synthesis takes place when dephosphorylated at Thr-45 (PubMed:27257257). Nuclear ATP generation is required for extensive chromatin remodeling events that are energy-consuming (PubMed:27257257). Does not play a role in U8 snoRNA decapping activity (By similarity). Binds U8 snoRNA (By similarity).</text>
</comment>
<comment type="catalytic activity">
    <reaction evidence="10">
        <text>D-ribose 5-phosphate + ATP + H(+) = ADP-D-ribose + diphosphate</text>
        <dbReference type="Rhea" id="RHEA:50248"/>
        <dbReference type="ChEBI" id="CHEBI:15378"/>
        <dbReference type="ChEBI" id="CHEBI:30616"/>
        <dbReference type="ChEBI" id="CHEBI:33019"/>
        <dbReference type="ChEBI" id="CHEBI:57967"/>
        <dbReference type="ChEBI" id="CHEBI:78346"/>
        <dbReference type="EC" id="2.7.7.96"/>
    </reaction>
</comment>
<comment type="catalytic activity">
    <reaction evidence="5 8">
        <text>ADP-D-ribose + H2O = D-ribose 5-phosphate + AMP + 2 H(+)</text>
        <dbReference type="Rhea" id="RHEA:10412"/>
        <dbReference type="ChEBI" id="CHEBI:15377"/>
        <dbReference type="ChEBI" id="CHEBI:15378"/>
        <dbReference type="ChEBI" id="CHEBI:57967"/>
        <dbReference type="ChEBI" id="CHEBI:78346"/>
        <dbReference type="ChEBI" id="CHEBI:456215"/>
        <dbReference type="EC" id="3.6.1.13"/>
    </reaction>
</comment>
<comment type="catalytic activity">
    <reaction evidence="5 7 8">
        <text>8-oxo-dGDP + H2O = 8-oxo-dGMP + phosphate + H(+)</text>
        <dbReference type="Rhea" id="RHEA:32063"/>
        <dbReference type="ChEBI" id="CHEBI:15377"/>
        <dbReference type="ChEBI" id="CHEBI:15378"/>
        <dbReference type="ChEBI" id="CHEBI:43474"/>
        <dbReference type="ChEBI" id="CHEBI:63224"/>
        <dbReference type="ChEBI" id="CHEBI:63715"/>
        <dbReference type="EC" id="3.6.1.58"/>
    </reaction>
</comment>
<comment type="cofactor">
    <cofactor evidence="5 6 9">
        <name>Mg(2+)</name>
        <dbReference type="ChEBI" id="CHEBI:18420"/>
    </cofactor>
    <text evidence="5 6 9">Binds 3 Mg(2+) ions per subunit.</text>
</comment>
<comment type="biophysicochemical properties">
    <kinetics>
        <KM evidence="7">2.1 uM for 8-oxo-dGDP</KM>
        <KM evidence="7">2.9 uM for 8-oxo-dADP</KM>
        <KM evidence="7">8.8 uM for 2-oxo-dADP</KM>
        <KM evidence="7">4 uM for 5-CHO-dUDP</KM>
        <KM evidence="7">7.6 uM for dGDP</KM>
        <KM evidence="7">12.6 uM for dADP</KM>
        <KM evidence="8">3.8 uM for 8-oxo-dGDP (at pH 8.0)</KM>
        <KM evidence="8">3.5 uM for 8-oxo-dGDP (at pH 10.0)</KM>
        <KM evidence="8">1.9 uM for ADP-D-ribose (at pH 8.0)</KM>
        <KM evidence="8">36 uM for 8-oxo-dGTP (at pH 10.0)</KM>
        <KM evidence="10">42.6 uM for ADP-D-ribose (in the presence of diphosphate)</KM>
        <Vmax evidence="8">11.0 pmol/min/ug enzyme with 8-oxo-dGDP as substrate (at pH 8.0)</Vmax>
        <Vmax evidence="8">2400.0 pmol/min/ug enzyme with ADP-D-ribose as substrate (at pH 8.0)</Vmax>
        <Vmax evidence="8">46.0 pmol/min/ug enzyme with 8-oxo-dGDP as substrate (at pH 10.0)</Vmax>
        <Vmax evidence="8">1.7 pmol/min/ug enzyme with 8-oxo-dGTP as substrate (at pH 10.0)</Vmax>
        <text evidence="7">kcat is 0.369 min(-1) for 8-OH-dGDP. kcat is 0.538 min(-1) for 8-OH-dADP. kcat is 0.226 min(-1) for 2-OH-dADP. kcat is 0.209 min(-1) for 5-CHO-dUDP. kcat is 0.929 min(-1) for dGDP. kcat is 0.365 min(-1) for dADP.</text>
    </kinetics>
</comment>
<comment type="subunit">
    <text evidence="5 6 9 10">Homodimer (PubMed:17052728, PubMed:18462755, PubMed:21768126, PubMed:27257257). Interacts with PARG (PubMed:27257257).</text>
</comment>
<comment type="interaction">
    <interactant intactId="EBI-721623">
        <id>Q9UKK9</id>
    </interactant>
    <interactant intactId="EBI-1053725">
        <id>P10606</id>
        <label>COX5B</label>
    </interactant>
    <organismsDiffer>false</organismsDiffer>
    <experiments>3</experiments>
</comment>
<comment type="interaction">
    <interactant intactId="EBI-721623">
        <id>Q9UKK9</id>
    </interactant>
    <interactant intactId="EBI-739467">
        <id>Q9H8Y8</id>
        <label>GORASP2</label>
    </interactant>
    <organismsDiffer>false</organismsDiffer>
    <experiments>3</experiments>
</comment>
<comment type="interaction">
    <interactant intactId="EBI-721623">
        <id>Q9UKK9</id>
    </interactant>
    <interactant intactId="EBI-721623">
        <id>Q9UKK9</id>
        <label>NUDT5</label>
    </interactant>
    <organismsDiffer>false</organismsDiffer>
    <experiments>3</experiments>
</comment>
<comment type="interaction">
    <interactant intactId="EBI-721623">
        <id>Q9UKK9</id>
    </interactant>
    <interactant intactId="EBI-3920254">
        <id>Q06203</id>
        <label>PPAT</label>
    </interactant>
    <organismsDiffer>false</organismsDiffer>
    <experiments>3</experiments>
</comment>
<comment type="subcellular location">
    <subcellularLocation>
        <location evidence="16">Nucleus</location>
    </subcellularLocation>
</comment>
<comment type="tissue specificity">
    <text evidence="4">Widely expressed. Most abundant in liver.</text>
</comment>
<comment type="induction">
    <text evidence="10">Overexpressed in cancer patients with a poor outcome.</text>
</comment>
<comment type="PTM">
    <text evidence="10">Phosphorylation at Thr-45 is required for homodimer stability; dephosphorylation results in destabilization of the homodimer. Dephosphorylation at Thr-45 promotes the ATP-synthesis activity.</text>
</comment>
<comment type="similarity">
    <text evidence="15">Belongs to the Nudix hydrolase family.</text>
</comment>
<evidence type="ECO:0000250" key="1">
    <source>
        <dbReference type="UniProtKB" id="Q9JKX6"/>
    </source>
</evidence>
<evidence type="ECO:0000255" key="2">
    <source>
        <dbReference type="PROSITE-ProRule" id="PRU00794"/>
    </source>
</evidence>
<evidence type="ECO:0000269" key="3">
    <source>
    </source>
</evidence>
<evidence type="ECO:0000269" key="4">
    <source>
    </source>
</evidence>
<evidence type="ECO:0000269" key="5">
    <source>
    </source>
</evidence>
<evidence type="ECO:0000269" key="6">
    <source>
    </source>
</evidence>
<evidence type="ECO:0000269" key="7">
    <source>
    </source>
</evidence>
<evidence type="ECO:0000269" key="8">
    <source>
    </source>
</evidence>
<evidence type="ECO:0000269" key="9">
    <source>
    </source>
</evidence>
<evidence type="ECO:0000269" key="10">
    <source>
    </source>
</evidence>
<evidence type="ECO:0000303" key="11">
    <source>
    </source>
</evidence>
<evidence type="ECO:0000303" key="12">
    <source>
    </source>
</evidence>
<evidence type="ECO:0000303" key="13">
    <source>
    </source>
</evidence>
<evidence type="ECO:0000303" key="14">
    <source>
    </source>
</evidence>
<evidence type="ECO:0000305" key="15"/>
<evidence type="ECO:0000305" key="16">
    <source>
    </source>
</evidence>
<evidence type="ECO:0007744" key="17">
    <source>
    </source>
</evidence>
<evidence type="ECO:0007744" key="18">
    <source>
    </source>
</evidence>
<evidence type="ECO:0007744" key="19">
    <source>
    </source>
</evidence>
<evidence type="ECO:0007744" key="20">
    <source>
    </source>
</evidence>
<evidence type="ECO:0007744" key="21">
    <source>
    </source>
</evidence>
<evidence type="ECO:0007744" key="22">
    <source>
    </source>
</evidence>
<evidence type="ECO:0007744" key="23">
    <source>
    </source>
</evidence>
<evidence type="ECO:0007744" key="24">
    <source>
    </source>
</evidence>
<evidence type="ECO:0007829" key="25">
    <source>
        <dbReference type="PDB" id="2DSB"/>
    </source>
</evidence>
<evidence type="ECO:0007829" key="26">
    <source>
        <dbReference type="PDB" id="3AC9"/>
    </source>
</evidence>
<evidence type="ECO:0007829" key="27">
    <source>
        <dbReference type="PDB" id="5QK0"/>
    </source>
</evidence>
<accession>Q9UKK9</accession>
<accession>A8K516</accession>
<accession>Q6IAG0</accession>
<accession>Q9UH49</accession>
<reference key="1">
    <citation type="journal article" date="1999" name="Biochem. J.">
        <title>Cloning, expression and characterization of YSA1H, a human adenosine 5'-diphosphosugar pyrophosphatase possessing a MutT motif.</title>
        <authorList>
            <person name="Gasmi L."/>
            <person name="Cartwright J.L."/>
            <person name="McLennan A.G."/>
        </authorList>
    </citation>
    <scope>NUCLEOTIDE SEQUENCE [MRNA]</scope>
    <scope>FUNCTION</scope>
</reference>
<reference key="2">
    <citation type="journal article" date="2000" name="J. Biol. Chem.">
        <title>Cloning and characterization of a new member of the Nudix hydrolases from human and mouse.</title>
        <authorList>
            <person name="Yang H."/>
            <person name="Slupska M.M."/>
            <person name="Wei Y.-F."/>
            <person name="Tai J.H."/>
            <person name="Luther W.M."/>
            <person name="Xia Y.-R."/>
            <person name="Shih D.M."/>
            <person name="Chiang J.-H."/>
            <person name="Baikalov C."/>
            <person name="Fitz-Gibbon S."/>
            <person name="Phan I.T."/>
            <person name="Conrad A."/>
            <person name="Miller J.H."/>
        </authorList>
    </citation>
    <scope>NUCLEOTIDE SEQUENCE [MRNA]</scope>
    <scope>FUNCTION</scope>
    <scope>TISSUE SPECIFICITY</scope>
</reference>
<reference key="3">
    <citation type="journal article" date="2000" name="Genome Res.">
        <title>Cloning and functional analysis of cDNAs with open reading frames for 300 previously undefined genes expressed in CD34+ hematopoietic stem/progenitor cells.</title>
        <authorList>
            <person name="Zhang Q.-H."/>
            <person name="Ye M."/>
            <person name="Wu X.-Y."/>
            <person name="Ren S.-X."/>
            <person name="Zhao M."/>
            <person name="Zhao C.-J."/>
            <person name="Fu G."/>
            <person name="Shen Y."/>
            <person name="Fan H.-Y."/>
            <person name="Lu G."/>
            <person name="Zhong M."/>
            <person name="Xu X.-R."/>
            <person name="Han Z.-G."/>
            <person name="Zhang J.-W."/>
            <person name="Tao J."/>
            <person name="Huang Q.-H."/>
            <person name="Zhou J."/>
            <person name="Hu G.-X."/>
            <person name="Gu J."/>
            <person name="Chen S.-J."/>
            <person name="Chen Z."/>
        </authorList>
    </citation>
    <scope>NUCLEOTIDE SEQUENCE [LARGE SCALE MRNA]</scope>
    <source>
        <tissue>Umbilical cord blood</tissue>
    </source>
</reference>
<reference key="4">
    <citation type="submission" date="2004-06" db="EMBL/GenBank/DDBJ databases">
        <title>Cloning of human full open reading frames in Gateway(TM) system entry vector (pDONR201).</title>
        <authorList>
            <person name="Ebert L."/>
            <person name="Schick M."/>
            <person name="Neubert P."/>
            <person name="Schatten R."/>
            <person name="Henze S."/>
            <person name="Korn B."/>
        </authorList>
    </citation>
    <scope>NUCLEOTIDE SEQUENCE [LARGE SCALE MRNA]</scope>
</reference>
<reference key="5">
    <citation type="journal article" date="2004" name="Nat. Genet.">
        <title>Complete sequencing and characterization of 21,243 full-length human cDNAs.</title>
        <authorList>
            <person name="Ota T."/>
            <person name="Suzuki Y."/>
            <person name="Nishikawa T."/>
            <person name="Otsuki T."/>
            <person name="Sugiyama T."/>
            <person name="Irie R."/>
            <person name="Wakamatsu A."/>
            <person name="Hayashi K."/>
            <person name="Sato H."/>
            <person name="Nagai K."/>
            <person name="Kimura K."/>
            <person name="Makita H."/>
            <person name="Sekine M."/>
            <person name="Obayashi M."/>
            <person name="Nishi T."/>
            <person name="Shibahara T."/>
            <person name="Tanaka T."/>
            <person name="Ishii S."/>
            <person name="Yamamoto J."/>
            <person name="Saito K."/>
            <person name="Kawai Y."/>
            <person name="Isono Y."/>
            <person name="Nakamura Y."/>
            <person name="Nagahari K."/>
            <person name="Murakami K."/>
            <person name="Yasuda T."/>
            <person name="Iwayanagi T."/>
            <person name="Wagatsuma M."/>
            <person name="Shiratori A."/>
            <person name="Sudo H."/>
            <person name="Hosoiri T."/>
            <person name="Kaku Y."/>
            <person name="Kodaira H."/>
            <person name="Kondo H."/>
            <person name="Sugawara M."/>
            <person name="Takahashi M."/>
            <person name="Kanda K."/>
            <person name="Yokoi T."/>
            <person name="Furuya T."/>
            <person name="Kikkawa E."/>
            <person name="Omura Y."/>
            <person name="Abe K."/>
            <person name="Kamihara K."/>
            <person name="Katsuta N."/>
            <person name="Sato K."/>
            <person name="Tanikawa M."/>
            <person name="Yamazaki M."/>
            <person name="Ninomiya K."/>
            <person name="Ishibashi T."/>
            <person name="Yamashita H."/>
            <person name="Murakawa K."/>
            <person name="Fujimori K."/>
            <person name="Tanai H."/>
            <person name="Kimata M."/>
            <person name="Watanabe M."/>
            <person name="Hiraoka S."/>
            <person name="Chiba Y."/>
            <person name="Ishida S."/>
            <person name="Ono Y."/>
            <person name="Takiguchi S."/>
            <person name="Watanabe S."/>
            <person name="Yosida M."/>
            <person name="Hotuta T."/>
            <person name="Kusano J."/>
            <person name="Kanehori K."/>
            <person name="Takahashi-Fujii A."/>
            <person name="Hara H."/>
            <person name="Tanase T.-O."/>
            <person name="Nomura Y."/>
            <person name="Togiya S."/>
            <person name="Komai F."/>
            <person name="Hara R."/>
            <person name="Takeuchi K."/>
            <person name="Arita M."/>
            <person name="Imose N."/>
            <person name="Musashino K."/>
            <person name="Yuuki H."/>
            <person name="Oshima A."/>
            <person name="Sasaki N."/>
            <person name="Aotsuka S."/>
            <person name="Yoshikawa Y."/>
            <person name="Matsunawa H."/>
            <person name="Ichihara T."/>
            <person name="Shiohata N."/>
            <person name="Sano S."/>
            <person name="Moriya S."/>
            <person name="Momiyama H."/>
            <person name="Satoh N."/>
            <person name="Takami S."/>
            <person name="Terashima Y."/>
            <person name="Suzuki O."/>
            <person name="Nakagawa S."/>
            <person name="Senoh A."/>
            <person name="Mizoguchi H."/>
            <person name="Goto Y."/>
            <person name="Shimizu F."/>
            <person name="Wakebe H."/>
            <person name="Hishigaki H."/>
            <person name="Watanabe T."/>
            <person name="Sugiyama A."/>
            <person name="Takemoto M."/>
            <person name="Kawakami B."/>
            <person name="Yamazaki M."/>
            <person name="Watanabe K."/>
            <person name="Kumagai A."/>
            <person name="Itakura S."/>
            <person name="Fukuzumi Y."/>
            <person name="Fujimori Y."/>
            <person name="Komiyama M."/>
            <person name="Tashiro H."/>
            <person name="Tanigami A."/>
            <person name="Fujiwara T."/>
            <person name="Ono T."/>
            <person name="Yamada K."/>
            <person name="Fujii Y."/>
            <person name="Ozaki K."/>
            <person name="Hirao M."/>
            <person name="Ohmori Y."/>
            <person name="Kawabata A."/>
            <person name="Hikiji T."/>
            <person name="Kobatake N."/>
            <person name="Inagaki H."/>
            <person name="Ikema Y."/>
            <person name="Okamoto S."/>
            <person name="Okitani R."/>
            <person name="Kawakami T."/>
            <person name="Noguchi S."/>
            <person name="Itoh T."/>
            <person name="Shigeta K."/>
            <person name="Senba T."/>
            <person name="Matsumura K."/>
            <person name="Nakajima Y."/>
            <person name="Mizuno T."/>
            <person name="Morinaga M."/>
            <person name="Sasaki M."/>
            <person name="Togashi T."/>
            <person name="Oyama M."/>
            <person name="Hata H."/>
            <person name="Watanabe M."/>
            <person name="Komatsu T."/>
            <person name="Mizushima-Sugano J."/>
            <person name="Satoh T."/>
            <person name="Shirai Y."/>
            <person name="Takahashi Y."/>
            <person name="Nakagawa K."/>
            <person name="Okumura K."/>
            <person name="Nagase T."/>
            <person name="Nomura N."/>
            <person name="Kikuchi H."/>
            <person name="Masuho Y."/>
            <person name="Yamashita R."/>
            <person name="Nakai K."/>
            <person name="Yada T."/>
            <person name="Nakamura Y."/>
            <person name="Ohara O."/>
            <person name="Isogai T."/>
            <person name="Sugano S."/>
        </authorList>
    </citation>
    <scope>NUCLEOTIDE SEQUENCE [LARGE SCALE MRNA]</scope>
</reference>
<reference key="6">
    <citation type="submission" date="2005-09" db="EMBL/GenBank/DDBJ databases">
        <authorList>
            <person name="Mural R.J."/>
            <person name="Istrail S."/>
            <person name="Sutton G.G."/>
            <person name="Florea L."/>
            <person name="Halpern A.L."/>
            <person name="Mobarry C.M."/>
            <person name="Lippert R."/>
            <person name="Walenz B."/>
            <person name="Shatkay H."/>
            <person name="Dew I."/>
            <person name="Miller J.R."/>
            <person name="Flanigan M.J."/>
            <person name="Edwards N.J."/>
            <person name="Bolanos R."/>
            <person name="Fasulo D."/>
            <person name="Halldorsson B.V."/>
            <person name="Hannenhalli S."/>
            <person name="Turner R."/>
            <person name="Yooseph S."/>
            <person name="Lu F."/>
            <person name="Nusskern D.R."/>
            <person name="Shue B.C."/>
            <person name="Zheng X.H."/>
            <person name="Zhong F."/>
            <person name="Delcher A.L."/>
            <person name="Huson D.H."/>
            <person name="Kravitz S.A."/>
            <person name="Mouchard L."/>
            <person name="Reinert K."/>
            <person name="Remington K.A."/>
            <person name="Clark A.G."/>
            <person name="Waterman M.S."/>
            <person name="Eichler E.E."/>
            <person name="Adams M.D."/>
            <person name="Hunkapiller M.W."/>
            <person name="Myers E.W."/>
            <person name="Venter J.C."/>
        </authorList>
    </citation>
    <scope>NUCLEOTIDE SEQUENCE [LARGE SCALE GENOMIC DNA]</scope>
</reference>
<reference key="7">
    <citation type="journal article" date="2004" name="Genome Res.">
        <title>The status, quality, and expansion of the NIH full-length cDNA project: the Mammalian Gene Collection (MGC).</title>
        <authorList>
            <consortium name="The MGC Project Team"/>
        </authorList>
    </citation>
    <scope>NUCLEOTIDE SEQUENCE [LARGE SCALE MRNA]</scope>
    <source>
        <tissue>Placenta</tissue>
    </source>
</reference>
<reference key="8">
    <citation type="journal article" date="2005" name="Nat. Biotechnol.">
        <title>Immunoaffinity profiling of tyrosine phosphorylation in cancer cells.</title>
        <authorList>
            <person name="Rush J."/>
            <person name="Moritz A."/>
            <person name="Lee K.A."/>
            <person name="Guo A."/>
            <person name="Goss V.L."/>
            <person name="Spek E.J."/>
            <person name="Zhang H."/>
            <person name="Zha X.-M."/>
            <person name="Polakiewicz R.D."/>
            <person name="Comb M.J."/>
        </authorList>
    </citation>
    <scope>PHOSPHORYLATION [LARGE SCALE ANALYSIS] AT TYR-74</scope>
    <scope>IDENTIFICATION BY MASS SPECTROMETRY [LARGE SCALE ANALYSIS]</scope>
</reference>
<reference key="9">
    <citation type="journal article" date="2009" name="Anal. Chem.">
        <title>Lys-N and trypsin cover complementary parts of the phosphoproteome in a refined SCX-based approach.</title>
        <authorList>
            <person name="Gauci S."/>
            <person name="Helbig A.O."/>
            <person name="Slijper M."/>
            <person name="Krijgsveld J."/>
            <person name="Heck A.J."/>
            <person name="Mohammed S."/>
        </authorList>
    </citation>
    <scope>ACETYLATION [LARGE SCALE ANALYSIS] AT MET-1</scope>
    <scope>IDENTIFICATION BY MASS SPECTROMETRY [LARGE SCALE ANALYSIS]</scope>
</reference>
<reference key="10">
    <citation type="journal article" date="2009" name="DNA Repair">
        <title>NUDT5 hydrolyzes oxidized deoxyribonucleoside diphosphates with broad substrate specificity.</title>
        <authorList>
            <person name="Kamiya H."/>
            <person name="Hori M."/>
            <person name="Arimori T."/>
            <person name="Sekiguchi M."/>
            <person name="Yamagata Y."/>
            <person name="Harashima H."/>
        </authorList>
    </citation>
    <scope>FUNCTION</scope>
    <scope>CATALYTIC ACTIVITY</scope>
    <scope>BIOPHYSICOCHEMICAL PROPERTIES</scope>
</reference>
<reference key="11">
    <citation type="journal article" date="2009" name="Science">
        <title>Lysine acetylation targets protein complexes and co-regulates major cellular functions.</title>
        <authorList>
            <person name="Choudhary C."/>
            <person name="Kumar C."/>
            <person name="Gnad F."/>
            <person name="Nielsen M.L."/>
            <person name="Rehman M."/>
            <person name="Walther T.C."/>
            <person name="Olsen J.V."/>
            <person name="Mann M."/>
        </authorList>
    </citation>
    <scope>ACETYLATION [LARGE SCALE ANALYSIS] AT LYS-210 AND LYS-218</scope>
    <scope>IDENTIFICATION BY MASS SPECTROMETRY [LARGE SCALE ANALYSIS]</scope>
</reference>
<reference key="12">
    <citation type="journal article" date="2010" name="Sci. Signal.">
        <title>Quantitative phosphoproteomics reveals widespread full phosphorylation site occupancy during mitosis.</title>
        <authorList>
            <person name="Olsen J.V."/>
            <person name="Vermeulen M."/>
            <person name="Santamaria A."/>
            <person name="Kumar C."/>
            <person name="Miller M.L."/>
            <person name="Jensen L.J."/>
            <person name="Gnad F."/>
            <person name="Cox J."/>
            <person name="Jensen T.S."/>
            <person name="Nigg E.A."/>
            <person name="Brunak S."/>
            <person name="Mann M."/>
        </authorList>
    </citation>
    <scope>ACETYLATION [LARGE SCALE ANALYSIS] AT MET-1</scope>
    <scope>PHOSPHORYLATION [LARGE SCALE ANALYSIS] AT SER-10</scope>
    <scope>IDENTIFICATION BY MASS SPECTROMETRY [LARGE SCALE ANALYSIS]</scope>
    <source>
        <tissue>Cervix carcinoma</tissue>
    </source>
</reference>
<reference key="13">
    <citation type="journal article" date="2011" name="BMC Syst. Biol.">
        <title>Initial characterization of the human central proteome.</title>
        <authorList>
            <person name="Burkard T.R."/>
            <person name="Planyavsky M."/>
            <person name="Kaupe I."/>
            <person name="Breitwieser F.P."/>
            <person name="Buerckstuemmer T."/>
            <person name="Bennett K.L."/>
            <person name="Superti-Furga G."/>
            <person name="Colinge J."/>
        </authorList>
    </citation>
    <scope>IDENTIFICATION BY MASS SPECTROMETRY [LARGE SCALE ANALYSIS]</scope>
</reference>
<reference key="14">
    <citation type="journal article" date="2011" name="J. Biochem.">
        <title>Cleavage of oxidized guanine nucleotide and ADP sugar by human NUDT5 protein.</title>
        <authorList>
            <person name="Ito R."/>
            <person name="Sekiguchi M."/>
            <person name="Setoyama D."/>
            <person name="Nakatsu Y."/>
            <person name="Yamagata Y."/>
            <person name="Hayakawa H."/>
        </authorList>
    </citation>
    <scope>FUNCTION</scope>
    <scope>CATALYTIC ACTIVITY</scope>
    <scope>BIOPHYSICOCHEMICAL PROPERTIES</scope>
</reference>
<reference key="15">
    <citation type="journal article" date="2011" name="Sci. Signal.">
        <title>System-wide temporal characterization of the proteome and phosphoproteome of human embryonic stem cell differentiation.</title>
        <authorList>
            <person name="Rigbolt K.T."/>
            <person name="Prokhorova T.A."/>
            <person name="Akimov V."/>
            <person name="Henningsen J."/>
            <person name="Johansen P.T."/>
            <person name="Kratchmarova I."/>
            <person name="Kassem M."/>
            <person name="Mann M."/>
            <person name="Olsen J.V."/>
            <person name="Blagoev B."/>
        </authorList>
    </citation>
    <scope>ACETYLATION [LARGE SCALE ANALYSIS] AT MET-1</scope>
    <scope>PHOSPHORYLATION [LARGE SCALE ANALYSIS] AT SER-3</scope>
    <scope>IDENTIFICATION BY MASS SPECTROMETRY [LARGE SCALE ANALYSIS]</scope>
</reference>
<reference key="16">
    <citation type="journal article" date="2012" name="J. Proteome Res.">
        <title>Resveratrol-induced changes of the human adipocyte secretion profile.</title>
        <authorList>
            <person name="Rosenow A."/>
            <person name="Noben J.P."/>
            <person name="Jocken J."/>
            <person name="Kallendrusch S."/>
            <person name="Fischer-Posovszky P."/>
            <person name="Mariman E.C."/>
            <person name="Renes J."/>
        </authorList>
    </citation>
    <scope>IDENTIFICATION BY MASS SPECTROMETRY [LARGE SCALE ANALYSIS]</scope>
</reference>
<reference key="17">
    <citation type="journal article" date="2012" name="Mol. Cell. Proteomics">
        <title>Comparative large-scale characterisation of plant vs. mammal proteins reveals similar and idiosyncratic N-alpha acetylation features.</title>
        <authorList>
            <person name="Bienvenut W.V."/>
            <person name="Sumpton D."/>
            <person name="Martinez A."/>
            <person name="Lilla S."/>
            <person name="Espagne C."/>
            <person name="Meinnel T."/>
            <person name="Giglione C."/>
        </authorList>
    </citation>
    <scope>ACETYLATION [LARGE SCALE ANALYSIS] AT MET-1</scope>
    <scope>IDENTIFICATION BY MASS SPECTROMETRY [LARGE SCALE ANALYSIS]</scope>
</reference>
<reference key="18">
    <citation type="journal article" date="2013" name="J. Proteome Res.">
        <title>Toward a comprehensive characterization of a human cancer cell phosphoproteome.</title>
        <authorList>
            <person name="Zhou H."/>
            <person name="Di Palma S."/>
            <person name="Preisinger C."/>
            <person name="Peng M."/>
            <person name="Polat A.N."/>
            <person name="Heck A.J."/>
            <person name="Mohammed S."/>
        </authorList>
    </citation>
    <scope>PHOSPHORYLATION [LARGE SCALE ANALYSIS] AT SER-3</scope>
    <scope>IDENTIFICATION BY MASS SPECTROMETRY [LARGE SCALE ANALYSIS]</scope>
    <source>
        <tissue>Erythroleukemia</tissue>
    </source>
</reference>
<reference key="19">
    <citation type="journal article" date="2016" name="Science">
        <title>ADP-ribose-derived nuclear ATP synthesis by NUDIX5 is required for chromatin remodeling.</title>
        <authorList>
            <person name="Wright R.H."/>
            <person name="Lioutas A."/>
            <person name="Le Dily F."/>
            <person name="Soronellas D."/>
            <person name="Pohl A."/>
            <person name="Bonet J."/>
            <person name="Nacht A.S."/>
            <person name="Samino S."/>
            <person name="Font-Mateu J."/>
            <person name="Vicent G.P."/>
            <person name="Wierer M."/>
            <person name="Trabado M.A."/>
            <person name="Schelhorn C."/>
            <person name="Carolis C."/>
            <person name="Macias M.J."/>
            <person name="Yanes O."/>
            <person name="Oliva B."/>
            <person name="Beato M."/>
        </authorList>
    </citation>
    <scope>FUNCTION</scope>
    <scope>SUBCELLULAR LOCATION</scope>
    <scope>CATALYTIC ACTIVITY</scope>
    <scope>BIOPHYSICOCHEMICAL PROPERTIES</scope>
    <scope>SUBUNIT</scope>
    <scope>INDUCTION</scope>
    <scope>INTERACTION WITH PARG</scope>
    <scope>PHOSPHORYLATION AT THR-45</scope>
    <scope>MUTAGENESIS OF THR-45 AND GLU-112</scope>
</reference>
<reference key="20">
    <citation type="journal article" date="2017" name="Nat. Struct. Mol. Biol.">
        <title>Site-specific mapping of the human SUMO proteome reveals co-modification with phosphorylation.</title>
        <authorList>
            <person name="Hendriks I.A."/>
            <person name="Lyon D."/>
            <person name="Young C."/>
            <person name="Jensen L.J."/>
            <person name="Vertegaal A.C."/>
            <person name="Nielsen M.L."/>
        </authorList>
    </citation>
    <scope>SUMOYLATION [LARGE SCALE ANALYSIS] AT LYS-42</scope>
    <scope>IDENTIFICATION BY MASS SPECTROMETRY [LARGE SCALE ANALYSIS]</scope>
</reference>
<reference key="21">
    <citation type="journal article" date="2006" name="J. Mol. Biol.">
        <title>Crystal structures of human NUDT5 reveal insights into the structural basis of the substrate specificity.</title>
        <authorList>
            <person name="Zha M."/>
            <person name="Zhong C."/>
            <person name="Peng Y."/>
            <person name="Hu H."/>
            <person name="Ding J."/>
        </authorList>
    </citation>
    <scope>X-RAY CRYSTALLOGRAPHY (2.0 ANGSTROMS) OF 1-210 IN COMPLEX WITH AMP; MAGNESIUM IONS AND ADP-RIBOSE</scope>
    <scope>FUNCTION</scope>
    <scope>CATALYTIC ACTIVITY</scope>
    <scope>SUBUNIT</scope>
    <scope>COFACTOR</scope>
</reference>
<reference key="22">
    <citation type="journal article" date="2008" name="J. Mol. Biol.">
        <title>Molecular mechanism of ADP-ribose hydrolysis by human NUDT5 from structural and kinetic studies.</title>
        <authorList>
            <person name="Zha M."/>
            <person name="Guo Q."/>
            <person name="Zhang Y."/>
            <person name="Yu B."/>
            <person name="Ou Y."/>
            <person name="Zhong C."/>
            <person name="Ding J."/>
        </authorList>
    </citation>
    <scope>X-RAY CRYSTALLOGRAPHY (2.0 ANGSTROMS) OF 1-210 IN COMPLEX WITH AMPCPR AND MAGNESIUM IONS</scope>
    <scope>COFACTOR</scope>
    <scope>MUTAGENESIS OF TRP-28; TRP-46; ARG-51; ARG-84; LEU-98; GLU-112; GLU-116 AND GLU-166</scope>
    <scope>SUBUNIT</scope>
</reference>
<reference key="23">
    <citation type="journal article" date="2011" name="Nucleic Acids Res.">
        <title>Diverse substrate recognition and hydrolysis mechanisms of human NUDT5.</title>
        <authorList>
            <person name="Arimori T."/>
            <person name="Tamaoki H."/>
            <person name="Nakamura T."/>
            <person name="Kamiya H."/>
            <person name="Ikemizu S."/>
            <person name="Takagi Y."/>
            <person name="Ishibashi T."/>
            <person name="Harashima H."/>
            <person name="Sekiguchi M."/>
            <person name="Yamagata Y."/>
        </authorList>
    </citation>
    <scope>X-RAY CRYSTALLOGRAPHY (2.05 ANGSTROMS) OF 13-208 IN COMPLEX WITH 8-OXO-DGDP; 8-OXO-DGMP; 8-OXO-DADP AND MANGANESE IONS</scope>
    <scope>COFACTOR</scope>
    <scope>SUBUNIT</scope>
</reference>
<keyword id="KW-0002">3D-structure</keyword>
<keyword id="KW-0007">Acetylation</keyword>
<keyword id="KW-0378">Hydrolase</keyword>
<keyword id="KW-1017">Isopeptide bond</keyword>
<keyword id="KW-0460">Magnesium</keyword>
<keyword id="KW-0479">Metal-binding</keyword>
<keyword id="KW-0539">Nucleus</keyword>
<keyword id="KW-0597">Phosphoprotein</keyword>
<keyword id="KW-1267">Proteomics identification</keyword>
<keyword id="KW-1185">Reference proteome</keyword>
<keyword id="KW-0694">RNA-binding</keyword>
<keyword id="KW-0808">Transferase</keyword>
<keyword id="KW-0832">Ubl conjugation</keyword>
<protein>
    <recommendedName>
        <fullName>ADP-sugar pyrophosphatase</fullName>
        <ecNumber evidence="5 8">3.6.1.13</ecNumber>
    </recommendedName>
    <alternativeName>
        <fullName>8-oxo-dGDP phosphatase</fullName>
        <ecNumber evidence="5 7 8">3.6.1.58</ecNumber>
    </alternativeName>
    <alternativeName>
        <fullName evidence="16">Nuclear ATP-synthesis protein NUDIX5</fullName>
        <ecNumber evidence="10">2.7.7.96</ecNumber>
    </alternativeName>
    <alternativeName>
        <fullName evidence="15">Nucleoside diphosphate-linked moiety X motif 5</fullName>
        <shortName evidence="15">Nudix motif 5</shortName>
        <shortName evidence="13">hNUDT5</shortName>
    </alternativeName>
    <alternativeName>
        <fullName evidence="11">YSA1H</fullName>
    </alternativeName>
</protein>
<organism>
    <name type="scientific">Homo sapiens</name>
    <name type="common">Human</name>
    <dbReference type="NCBI Taxonomy" id="9606"/>
    <lineage>
        <taxon>Eukaryota</taxon>
        <taxon>Metazoa</taxon>
        <taxon>Chordata</taxon>
        <taxon>Craniata</taxon>
        <taxon>Vertebrata</taxon>
        <taxon>Euteleostomi</taxon>
        <taxon>Mammalia</taxon>
        <taxon>Eutheria</taxon>
        <taxon>Euarchontoglires</taxon>
        <taxon>Primates</taxon>
        <taxon>Haplorrhini</taxon>
        <taxon>Catarrhini</taxon>
        <taxon>Hominidae</taxon>
        <taxon>Homo</taxon>
    </lineage>
</organism>